<dbReference type="EC" id="2.3.1.-" evidence="10"/>
<dbReference type="EMBL" id="KY349137">
    <property type="protein sequence ID" value="ART41209.1"/>
    <property type="molecule type" value="Genomic_DNA"/>
</dbReference>
<dbReference type="SMR" id="A0A1Y0BRF1"/>
<dbReference type="ESTHER" id="penro-adrd">
    <property type="family name" value="BD-FAE"/>
</dbReference>
<dbReference type="UniPathway" id="UPA00213"/>
<dbReference type="GO" id="GO:0004315">
    <property type="term" value="F:3-oxoacyl-[acyl-carrier-protein] synthase activity"/>
    <property type="evidence" value="ECO:0007669"/>
    <property type="project" value="InterPro"/>
</dbReference>
<dbReference type="GO" id="GO:0004312">
    <property type="term" value="F:fatty acid synthase activity"/>
    <property type="evidence" value="ECO:0007669"/>
    <property type="project" value="TreeGrafter"/>
</dbReference>
<dbReference type="GO" id="GO:0008168">
    <property type="term" value="F:methyltransferase activity"/>
    <property type="evidence" value="ECO:0007669"/>
    <property type="project" value="UniProtKB-KW"/>
</dbReference>
<dbReference type="GO" id="GO:0008236">
    <property type="term" value="F:serine-type peptidase activity"/>
    <property type="evidence" value="ECO:0007669"/>
    <property type="project" value="InterPro"/>
</dbReference>
<dbReference type="GO" id="GO:0017000">
    <property type="term" value="P:antibiotic biosynthetic process"/>
    <property type="evidence" value="ECO:0007669"/>
    <property type="project" value="UniProtKB-ARBA"/>
</dbReference>
<dbReference type="GO" id="GO:0006633">
    <property type="term" value="P:fatty acid biosynthetic process"/>
    <property type="evidence" value="ECO:0007669"/>
    <property type="project" value="InterPro"/>
</dbReference>
<dbReference type="GO" id="GO:0032259">
    <property type="term" value="P:methylation"/>
    <property type="evidence" value="ECO:0007669"/>
    <property type="project" value="UniProtKB-KW"/>
</dbReference>
<dbReference type="GO" id="GO:0006508">
    <property type="term" value="P:proteolysis"/>
    <property type="evidence" value="ECO:0007669"/>
    <property type="project" value="InterPro"/>
</dbReference>
<dbReference type="GO" id="GO:0044550">
    <property type="term" value="P:secondary metabolite biosynthetic process"/>
    <property type="evidence" value="ECO:0007669"/>
    <property type="project" value="UniProtKB-ARBA"/>
</dbReference>
<dbReference type="GO" id="GO:0016114">
    <property type="term" value="P:terpenoid biosynthetic process"/>
    <property type="evidence" value="ECO:0007669"/>
    <property type="project" value="UniProtKB-UniPathway"/>
</dbReference>
<dbReference type="CDD" id="cd00833">
    <property type="entry name" value="PKS"/>
    <property type="match status" value="1"/>
</dbReference>
<dbReference type="Gene3D" id="3.30.70.3290">
    <property type="match status" value="1"/>
</dbReference>
<dbReference type="Gene3D" id="3.40.47.10">
    <property type="match status" value="1"/>
</dbReference>
<dbReference type="Gene3D" id="1.10.1200.10">
    <property type="entry name" value="ACP-like"/>
    <property type="match status" value="1"/>
</dbReference>
<dbReference type="Gene3D" id="3.40.50.1820">
    <property type="entry name" value="alpha/beta hydrolase"/>
    <property type="match status" value="1"/>
</dbReference>
<dbReference type="Gene3D" id="3.40.366.10">
    <property type="entry name" value="Malonyl-Coenzyme A Acyl Carrier Protein, domain 2"/>
    <property type="match status" value="2"/>
</dbReference>
<dbReference type="Gene3D" id="3.10.129.110">
    <property type="entry name" value="Polyketide synthase dehydratase"/>
    <property type="match status" value="1"/>
</dbReference>
<dbReference type="Gene3D" id="3.40.50.150">
    <property type="entry name" value="Vaccinia Virus protein VP39"/>
    <property type="match status" value="1"/>
</dbReference>
<dbReference type="InterPro" id="IPR013094">
    <property type="entry name" value="AB_hydrolase_3"/>
</dbReference>
<dbReference type="InterPro" id="IPR029058">
    <property type="entry name" value="AB_hydrolase_fold"/>
</dbReference>
<dbReference type="InterPro" id="IPR001227">
    <property type="entry name" value="Ac_transferase_dom_sf"/>
</dbReference>
<dbReference type="InterPro" id="IPR036736">
    <property type="entry name" value="ACP-like_sf"/>
</dbReference>
<dbReference type="InterPro" id="IPR014043">
    <property type="entry name" value="Acyl_transferase_dom"/>
</dbReference>
<dbReference type="InterPro" id="IPR016035">
    <property type="entry name" value="Acyl_Trfase/lysoPLipase"/>
</dbReference>
<dbReference type="InterPro" id="IPR018201">
    <property type="entry name" value="Ketoacyl_synth_AS"/>
</dbReference>
<dbReference type="InterPro" id="IPR014031">
    <property type="entry name" value="Ketoacyl_synth_C"/>
</dbReference>
<dbReference type="InterPro" id="IPR014030">
    <property type="entry name" value="Ketoacyl_synth_N"/>
</dbReference>
<dbReference type="InterPro" id="IPR016036">
    <property type="entry name" value="Malonyl_transacylase_ACP-bd"/>
</dbReference>
<dbReference type="InterPro" id="IPR013217">
    <property type="entry name" value="Methyltransf_12"/>
</dbReference>
<dbReference type="InterPro" id="IPR001375">
    <property type="entry name" value="Peptidase_S9_cat"/>
</dbReference>
<dbReference type="InterPro" id="IPR020841">
    <property type="entry name" value="PKS_Beta-ketoAc_synthase_dom"/>
</dbReference>
<dbReference type="InterPro" id="IPR042104">
    <property type="entry name" value="PKS_dehydratase_sf"/>
</dbReference>
<dbReference type="InterPro" id="IPR049552">
    <property type="entry name" value="PKS_DH_N"/>
</dbReference>
<dbReference type="InterPro" id="IPR049900">
    <property type="entry name" value="PKS_mFAS_DH"/>
</dbReference>
<dbReference type="InterPro" id="IPR050091">
    <property type="entry name" value="PKS_NRPS_Biosynth_Enz"/>
</dbReference>
<dbReference type="InterPro" id="IPR009081">
    <property type="entry name" value="PP-bd_ACP"/>
</dbReference>
<dbReference type="InterPro" id="IPR029063">
    <property type="entry name" value="SAM-dependent_MTases_sf"/>
</dbReference>
<dbReference type="InterPro" id="IPR032088">
    <property type="entry name" value="SAT"/>
</dbReference>
<dbReference type="InterPro" id="IPR016039">
    <property type="entry name" value="Thiolase-like"/>
</dbReference>
<dbReference type="PANTHER" id="PTHR43775">
    <property type="entry name" value="FATTY ACID SYNTHASE"/>
    <property type="match status" value="1"/>
</dbReference>
<dbReference type="PANTHER" id="PTHR43775:SF21">
    <property type="entry name" value="NON-REDUCING POLYKETIDE SYNTHASE AUSA-RELATED"/>
    <property type="match status" value="1"/>
</dbReference>
<dbReference type="Pfam" id="PF07859">
    <property type="entry name" value="Abhydrolase_3"/>
    <property type="match status" value="1"/>
</dbReference>
<dbReference type="Pfam" id="PF00698">
    <property type="entry name" value="Acyl_transf_1"/>
    <property type="match status" value="1"/>
</dbReference>
<dbReference type="Pfam" id="PF18558">
    <property type="entry name" value="HTH_51"/>
    <property type="match status" value="1"/>
</dbReference>
<dbReference type="Pfam" id="PF00109">
    <property type="entry name" value="ketoacyl-synt"/>
    <property type="match status" value="1"/>
</dbReference>
<dbReference type="Pfam" id="PF02801">
    <property type="entry name" value="Ketoacyl-synt_C"/>
    <property type="match status" value="1"/>
</dbReference>
<dbReference type="Pfam" id="PF08242">
    <property type="entry name" value="Methyltransf_12"/>
    <property type="match status" value="1"/>
</dbReference>
<dbReference type="Pfam" id="PF00326">
    <property type="entry name" value="Peptidase_S9"/>
    <property type="match status" value="1"/>
</dbReference>
<dbReference type="Pfam" id="PF21089">
    <property type="entry name" value="PKS_DH_N"/>
    <property type="match status" value="1"/>
</dbReference>
<dbReference type="Pfam" id="PF00550">
    <property type="entry name" value="PP-binding"/>
    <property type="match status" value="1"/>
</dbReference>
<dbReference type="Pfam" id="PF16073">
    <property type="entry name" value="SAT"/>
    <property type="match status" value="1"/>
</dbReference>
<dbReference type="SMART" id="SM00827">
    <property type="entry name" value="PKS_AT"/>
    <property type="match status" value="1"/>
</dbReference>
<dbReference type="SMART" id="SM00825">
    <property type="entry name" value="PKS_KS"/>
    <property type="match status" value="1"/>
</dbReference>
<dbReference type="SUPFAM" id="SSF47336">
    <property type="entry name" value="ACP-like"/>
    <property type="match status" value="1"/>
</dbReference>
<dbReference type="SUPFAM" id="SSF53474">
    <property type="entry name" value="alpha/beta-Hydrolases"/>
    <property type="match status" value="1"/>
</dbReference>
<dbReference type="SUPFAM" id="SSF52151">
    <property type="entry name" value="FabD/lysophospholipase-like"/>
    <property type="match status" value="1"/>
</dbReference>
<dbReference type="SUPFAM" id="SSF55048">
    <property type="entry name" value="Probable ACP-binding domain of malonyl-CoA ACP transacylase"/>
    <property type="match status" value="1"/>
</dbReference>
<dbReference type="SUPFAM" id="SSF53335">
    <property type="entry name" value="S-adenosyl-L-methionine-dependent methyltransferases"/>
    <property type="match status" value="1"/>
</dbReference>
<dbReference type="SUPFAM" id="SSF53901">
    <property type="entry name" value="Thiolase-like"/>
    <property type="match status" value="1"/>
</dbReference>
<dbReference type="PROSITE" id="PS50075">
    <property type="entry name" value="CARRIER"/>
    <property type="match status" value="1"/>
</dbReference>
<dbReference type="PROSITE" id="PS00606">
    <property type="entry name" value="KS3_1"/>
    <property type="match status" value="1"/>
</dbReference>
<dbReference type="PROSITE" id="PS52004">
    <property type="entry name" value="KS3_2"/>
    <property type="match status" value="1"/>
</dbReference>
<dbReference type="PROSITE" id="PS52019">
    <property type="entry name" value="PKS_MFAS_DH"/>
    <property type="match status" value="1"/>
</dbReference>
<name>ADRD_PENRO</name>
<proteinExistence type="inferred from homology"/>
<reference key="1">
    <citation type="journal article" date="2017" name="Front. Microbiol.">
        <title>The biosynthetic gene cluster for andrastin A in Penicillium roqueforti.</title>
        <authorList>
            <person name="Rojas-Aedo J.F."/>
            <person name="Gil-Duran C."/>
            <person name="Del-Cid A."/>
            <person name="Valdes N."/>
            <person name="Alamos P."/>
            <person name="Vaca I."/>
            <person name="Garcia-Rico R.O."/>
            <person name="Levican G."/>
            <person name="Tello M."/>
            <person name="Chavez R."/>
        </authorList>
    </citation>
    <scope>NUCLEOTIDE SEQUENCE [GENOMIC DNA]</scope>
    <scope>IDENTIFICATION</scope>
    <scope>FUNCTION</scope>
    <scope>DISRUPTION PHENOTYPE</scope>
    <scope>PATHWAY</scope>
    <source>
        <strain>CECT 2905</strain>
    </source>
</reference>
<organism>
    <name type="scientific">Penicillium roqueforti</name>
    <dbReference type="NCBI Taxonomy" id="5082"/>
    <lineage>
        <taxon>Eukaryota</taxon>
        <taxon>Fungi</taxon>
        <taxon>Dikarya</taxon>
        <taxon>Ascomycota</taxon>
        <taxon>Pezizomycotina</taxon>
        <taxon>Eurotiomycetes</taxon>
        <taxon>Eurotiomycetidae</taxon>
        <taxon>Eurotiales</taxon>
        <taxon>Aspergillaceae</taxon>
        <taxon>Penicillium</taxon>
    </lineage>
</organism>
<keyword id="KW-0489">Methyltransferase</keyword>
<keyword id="KW-0511">Multifunctional enzyme</keyword>
<keyword id="KW-0596">Phosphopantetheine</keyword>
<keyword id="KW-0597">Phosphoprotein</keyword>
<keyword id="KW-0808">Transferase</keyword>
<protein>
    <recommendedName>
        <fullName evidence="9">Non-reducing polyketide synthase adrD</fullName>
        <ecNumber evidence="10">2.3.1.-</ecNumber>
    </recommendedName>
    <alternativeName>
        <fullName evidence="9">Andrastin A biosynthesis cluster protein D</fullName>
    </alternativeName>
</protein>
<feature type="chain" id="PRO_0000446475" description="Non-reducing polyketide synthase adrD">
    <location>
        <begin position="1"/>
        <end position="2495"/>
    </location>
</feature>
<feature type="domain" description="Ketosynthase family 3 (KS3)" evidence="5">
    <location>
        <begin position="386"/>
        <end position="807"/>
    </location>
</feature>
<feature type="domain" description="PKS/mFAS DH" evidence="6">
    <location>
        <begin position="1294"/>
        <end position="1601"/>
    </location>
</feature>
<feature type="domain" description="Carrier" evidence="4">
    <location>
        <begin position="1651"/>
        <end position="1725"/>
    </location>
</feature>
<feature type="region of interest" description="N-terminal acylcarrier protein transacylase domain (SAT)" evidence="3">
    <location>
        <begin position="14"/>
        <end position="252"/>
    </location>
</feature>
<feature type="region of interest" description="Malonyl-CoA:ACP transacylase (MAT) domain" evidence="3">
    <location>
        <begin position="913"/>
        <end position="1222"/>
    </location>
</feature>
<feature type="region of interest" description="N-terminal hotdog fold" evidence="6">
    <location>
        <begin position="1294"/>
        <end position="1422"/>
    </location>
</feature>
<feature type="region of interest" description="Product template (PT) domain" evidence="3">
    <location>
        <begin position="1295"/>
        <end position="1600"/>
    </location>
</feature>
<feature type="region of interest" description="C-terminal hotdog fold" evidence="6">
    <location>
        <begin position="1450"/>
        <end position="1601"/>
    </location>
</feature>
<feature type="region of interest" description="Methyltransferase (CMeT) domain" evidence="3">
    <location>
        <begin position="1887"/>
        <end position="2120"/>
    </location>
</feature>
<feature type="region of interest" description="Thioesterase (TE) domain" evidence="2">
    <location>
        <begin position="2150"/>
        <end position="2495"/>
    </location>
</feature>
<feature type="active site" description="For beta-ketoacyl synthase activity" evidence="5">
    <location>
        <position position="551"/>
    </location>
</feature>
<feature type="active site" description="For beta-ketoacyl synthase activity" evidence="5">
    <location>
        <position position="686"/>
    </location>
</feature>
<feature type="active site" description="For beta-ketoacyl synthase activity" evidence="5">
    <location>
        <position position="725"/>
    </location>
</feature>
<feature type="active site" description="For acyl/malonyl transferase activity" evidence="7">
    <location>
        <position position="1000"/>
    </location>
</feature>
<feature type="active site" description="Proton acceptor; for dehydratase activity" evidence="6">
    <location>
        <position position="1325"/>
    </location>
</feature>
<feature type="active site" description="Proton donor; for dehydratase activity" evidence="6">
    <location>
        <position position="1508"/>
    </location>
</feature>
<feature type="active site" description="For thioesterase activity" evidence="2">
    <location>
        <position position="2273"/>
    </location>
</feature>
<feature type="active site" description="For thioesterase activity" evidence="2">
    <location>
        <position position="2432"/>
    </location>
</feature>
<feature type="modified residue" description="O-(pantetheine 4'-phosphoryl)serine" evidence="4">
    <location>
        <position position="1685"/>
    </location>
</feature>
<evidence type="ECO:0000250" key="1">
    <source>
        <dbReference type="UniProtKB" id="B6HV32"/>
    </source>
</evidence>
<evidence type="ECO:0000250" key="2">
    <source>
        <dbReference type="UniProtKB" id="Q5ATJ7"/>
    </source>
</evidence>
<evidence type="ECO:0000255" key="3"/>
<evidence type="ECO:0000255" key="4">
    <source>
        <dbReference type="PROSITE-ProRule" id="PRU00258"/>
    </source>
</evidence>
<evidence type="ECO:0000255" key="5">
    <source>
        <dbReference type="PROSITE-ProRule" id="PRU01348"/>
    </source>
</evidence>
<evidence type="ECO:0000255" key="6">
    <source>
        <dbReference type="PROSITE-ProRule" id="PRU01363"/>
    </source>
</evidence>
<evidence type="ECO:0000255" key="7">
    <source>
        <dbReference type="PROSITE-ProRule" id="PRU10022"/>
    </source>
</evidence>
<evidence type="ECO:0000269" key="8">
    <source>
    </source>
</evidence>
<evidence type="ECO:0000303" key="9">
    <source>
    </source>
</evidence>
<evidence type="ECO:0000305" key="10">
    <source>
    </source>
</evidence>
<accession>A0A1Y0BRF1</accession>
<comment type="function">
    <text evidence="1 8">Non-reducing polyketide synthase; part of the gene cluster that mediates the biosynthesis of andrastins, meroterpenoid compounds that exhibit inhibitory activity against ras farnesyltransferase, suggesting that they could be promising leads for antitumor agents (PubMed:28529508). The first step of the pathway is the synthesis of 3,5-dimethylorsellinic acid (DMOA) by the polyketide synthase adrD via condensation of one acetyl-CoA starter unit with 3 malonyl-CoA units and 2 methylations (By similarity). DMAO is then converted to farnesyl-DMAO by the prenyltransferase adrG (By similarity). The methyltransferase adrK catalyzes the methylation of the carboxyl group of farnesyl-DMAO to farnesyl-DMAO methyl ester which is further converted to epoxyfarnesyl-DMAO methyl ester by the FAD-dependent monooxygenase adrH (By similarity). The terpene cyclase adrI then catalyzes the carbon skeletal rearrangement to generate the andrastin E, the first compound in the pathway having the andrastin scaffold, with the tetracyclic ring system (By similarity). The post-cyclization tailoring enzymes adrF, adrE, adrJ, and adrA, are involved in the conversion of andrastin E into andrastin A. The short chain dehydrogenase adrF is responsible for the oxidation of the C-3 a hydroxyl group of andrastin E to yield the corresponding ketone, andrastin D. The ketoreductase adrE stereoselectively reduces the carbonyl moiety to reverse the stereochemistry of the C-3 position to yield andrastin F. The acetyltransferase adrJ is the acetyltransferase that attaches the acetyl group to the C-3 hydroxyl group of andrastin F to yield andrastin C. Finally, the cytochrome P450 monooxygenase adrA catalyzes two sequential oxidation reactions of the C-23 methyl group, to generate the corresponding alcohol andrastin B, and aldehyde andrastin A (By similarity).</text>
</comment>
<comment type="catalytic activity">
    <reaction evidence="1">
        <text>3 malonyl-CoA + acetyl-CoA + 2 S-adenosyl-L-methionine = 3,5-dimethylorsellinate + 2 S-adenosyl-L-homocysteine + 3 CO2 + 4 CoA</text>
        <dbReference type="Rhea" id="RHEA:49628"/>
        <dbReference type="ChEBI" id="CHEBI:16526"/>
        <dbReference type="ChEBI" id="CHEBI:57287"/>
        <dbReference type="ChEBI" id="CHEBI:57288"/>
        <dbReference type="ChEBI" id="CHEBI:57384"/>
        <dbReference type="ChEBI" id="CHEBI:57856"/>
        <dbReference type="ChEBI" id="CHEBI:59789"/>
        <dbReference type="ChEBI" id="CHEBI:131856"/>
    </reaction>
    <physiologicalReaction direction="left-to-right" evidence="1">
        <dbReference type="Rhea" id="RHEA:49629"/>
    </physiologicalReaction>
</comment>
<comment type="pathway">
    <text evidence="8">Secondary metabolite biosynthesis; terpenoid biosynthesis.</text>
</comment>
<comment type="domain">
    <text evidence="10">Multidomain protein; including a starter unit:ACP transacylase (SAT) that selects the starter unit; a ketosynthase (KS) that catalyzes repeated decarboxylative condensation to elongate the polyketide backbone; a malonyl-CoA:ACP transacylase (MAT) that selects and transfers the extender unit malonyl-CoA; a product template (PT) domain that controls the immediate cyclization regioselectivity of the reactive polyketide backbone; a methyltransferase (CMeT) domain that transfers methyl groups to the growing polyketide; and an acyl-carrier protein (ACP) that serves as the tether of the growing and completed polyketide via its phosphopantetheinyl arm.</text>
</comment>
<comment type="domain">
    <text evidence="10">The release of the polyketide chain from the non-reducing polyketide synthase is mediated by the thioesterase (TE) domain localized at the C-ter of the protein.</text>
</comment>
<comment type="disruption phenotype">
    <text evidence="8">Drastically reduces the production of andrastin A.</text>
</comment>
<sequence length="2495" mass="273592">MAEPPKTPGRPVCVVFGPQSSEIDETLFYISRNIDENPSLGFLKDVLQELPSLWSPITDAWSSLSSIPGATQLTVLAECVQGTTAAPKSAMNVFMTPLTVIRQIIDVWKFKEESQNRCRIVDAQGFCVGFLAAVAVASSNDSNEFEDIASTMIRLAVCIGAAVDLDGILHGPARSVALRWKSDSEKEQLDRVLGSSSTAYISCFTDATSVTVTVAEDEVDDLTKELGGHGLSVKIIDLKGRFHHSRHVTAVQYLADLCETDARFRLARTSPCVLPLRSNVDGHVIGKRFAIHKTALESILTKPSQWAITVSAAFEQARETDDDLAFVVIGTGQFVPRLVRTRVLDHLNNKWSDTKQHAILPNGIHRSSSTTRSRPSIDMAPIGPTVIPIAITGMGCRYAQADSPEQLWEMLELGRCGVNALPNERFKMENLLREPKGPFWGNYLANPDVFDHRFFGISAREAEAMDPQQRLLLQVGYEAMESAGYCGLRTSNIPTDVGCYVGVGSDDYTDNVGSSNANAFSATGTLQAFCTGRLSHYFGWTGPSVVVDTACSSAAVSIHLACKALQTNECSIAVAGGVNVMTSPRVTQNLAAASFLSPTGASKAFDASADGYCRGEGAGLVVLRPLKDAIHNGDPILAIIGGSAVNQGSNRSPITVPDSDSQISLYRKALVTSGVRPEDVTYVEAHGTGTQVGDPIEFESIRKTFGRPARTERLYVGSVKDNIGHTETSSGVAGLLKTVLMMQKHQIPKQANFVQLNPKIPTLDDAAIAIPTKSIHWPSAANSSSTAVAMVTNYGAAGSNAALVVKQYKAKSGLSNPVSPLPSEVPVILAANTVESLRSYCKALLSSVCDAQLTSCQDTAYNLAIKQSRDMDYVSAFSIPVDRPNELIAKLESISRETTNLEKQPAARLPVVLCFGGQNGNEATISEDLFNQCELLQYHLTECEKVCQTLDLPSLFPSIFQPGPIEDTVSLHCILFSIQYASAKSWIDSGLQVDRIIGHSFGQLTGLCVGGGLSLSDALYLVSERAKMIHSMWGSERGAMLLVEGSEVEVQGLLNRAAEHMADVAVDVACVNGPRNTILAGDERSLQMIEKLSAKAPSILRTKRLKNTHAFHSRLVDNIVPPLTKVAQQLQYKPLSIPIEACSQYDDWTYVTPGKIVDHSRRRVDFQTAVERVAQRIQGPAIWLEAGSASPIIPLVRRVIDTVAAFSNGHVYQALDLGGALAHRSLSQATCNLWSRGVKVQFWQFHDSQAKSYNWINLPPYQFAQTRHWIGYDPNAFASLPEVKPTVPSSDAPKEFVQLLTKQPTECVFAINTNDPLYQECTQGHAVLDQNLCPASLYFEIIVRAAGLIRPENDISPAMPHLKDLAISAPLVLNPRGNVMLSLTRARVGDSTWSFSLFTRESNKNKVTTHATGEISLHPFGQNTPLFVRLHSMNRLIDSSRVDSIANSRESSGLKGFAVYQAFRRVVNYADYYRGVEQVFATDHEAAGIVNLPSSRTKDASCDPMLVDNFIQVAGIHVNCLSETKEDEVFVCTGVGEILIGEAFMTRDPNCSRSWAVYSNVDRSIKNKITCDTFVLDRETDKLAVTILSATFTSVSIAGLSRVLKKLNNQPDDKKVPLGQSLRDDSKVALNPTPQNALAAVPAPLHSAPDSGHFMVVQEMLCDLLGIASDELLPSSNLEDIGVDSLMRTEVLVEIKKRFNFTIDTSSFVEIPDILTLVQTIFPDAATAPLTNGVHPSLQIETTEAVDSESNTHVIPTPISDEEIHGLIDIAPGLFTDIQRSMVHSQSTQWDGFCESVYPRQMALVTAYVVEAFKSLGVSLESFEAEHLIPQVPVLQQHSKVRSQLYSILQFSNLIRATDHGFVRTSVPVSTISSDVLHEEIIRLYPQHTSEHNLLRTTGSRLSDCLSGAADPLSLLFQDAEARRLMEDVYTNAPMFKAATNHLAQYLVNLLGRVDTTREIKILEIGGGTGGTTKALLSQLTAVPGLRFQYTFTDLSSGLLALARKKFKHYSFMKYQVLNIERAPTPDMLGQYDIVLSSNCVHATRSLVQSCSNINKLLRPDGLLCLIELTRNLFWFDLVFGLLEGWWLFEDGRQHALATEHVWKQTLSQSGFQWVDWTYNDSQESNVLRVITASPTSAVILPPSPRSPLYLMNEETIVYGKNDGVELSADIYYPRDLQPIGKPRPIALLIHGGGHIMLSRRDIRSKQVRMLLNAGFLPVSVDYRLCPEVSLTEGPMHDVCDALCWARHVLPSLTLGRPDIQPDGTQAVAVGWSTGAHLAMTLAWTSQQRGIAPPNAILAFYGPTDYEDSFWSQPNFPYGKNAASPEMRYDLWEGIYETPITAYNPPVDQKALGGWMSPADPRSRIALHMNWKGQSLPMLLHGGRFWSDHKDGDCGEELPVPTLEEIQAVSPLAQIRNGHYKTPTFIIHGTLDDLIPVEQAQRTSQELVTKGVEVQLRVVDKAVHLFDIYPGFEKDQAASRAVEDGYEFLRDHVRY</sequence>
<gene>
    <name evidence="9" type="primary">adrD</name>
</gene>